<accession>Q12CW6</accession>
<comment type="similarity">
    <text evidence="1">Belongs to the bacterial ribosomal protein bS16 family.</text>
</comment>
<keyword id="KW-1185">Reference proteome</keyword>
<keyword id="KW-0687">Ribonucleoprotein</keyword>
<keyword id="KW-0689">Ribosomal protein</keyword>
<proteinExistence type="inferred from homology"/>
<organism>
    <name type="scientific">Polaromonas sp. (strain JS666 / ATCC BAA-500)</name>
    <dbReference type="NCBI Taxonomy" id="296591"/>
    <lineage>
        <taxon>Bacteria</taxon>
        <taxon>Pseudomonadati</taxon>
        <taxon>Pseudomonadota</taxon>
        <taxon>Betaproteobacteria</taxon>
        <taxon>Burkholderiales</taxon>
        <taxon>Comamonadaceae</taxon>
        <taxon>Polaromonas</taxon>
    </lineage>
</organism>
<feature type="chain" id="PRO_1000049312" description="Small ribosomal subunit protein bS16">
    <location>
        <begin position="1"/>
        <end position="83"/>
    </location>
</feature>
<name>RS16_POLSJ</name>
<reference key="1">
    <citation type="journal article" date="2008" name="Appl. Environ. Microbiol.">
        <title>The genome of Polaromonas sp. strain JS666: insights into the evolution of a hydrocarbon- and xenobiotic-degrading bacterium, and features of relevance to biotechnology.</title>
        <authorList>
            <person name="Mattes T.E."/>
            <person name="Alexander A.K."/>
            <person name="Richardson P.M."/>
            <person name="Munk A.C."/>
            <person name="Han C.S."/>
            <person name="Stothard P."/>
            <person name="Coleman N.V."/>
        </authorList>
    </citation>
    <scope>NUCLEOTIDE SEQUENCE [LARGE SCALE GENOMIC DNA]</scope>
    <source>
        <strain>JS666 / ATCC BAA-500</strain>
    </source>
</reference>
<gene>
    <name evidence="1" type="primary">rpsP</name>
    <name type="ordered locus">Bpro_1690</name>
</gene>
<evidence type="ECO:0000255" key="1">
    <source>
        <dbReference type="HAMAP-Rule" id="MF_00385"/>
    </source>
</evidence>
<evidence type="ECO:0000305" key="2"/>
<protein>
    <recommendedName>
        <fullName evidence="1">Small ribosomal subunit protein bS16</fullName>
    </recommendedName>
    <alternativeName>
        <fullName evidence="2">30S ribosomal protein S16</fullName>
    </alternativeName>
</protein>
<sequence length="83" mass="9208">MVVIRLARGGSKHRPFFNIVVADKRVRRDGRFIERIGFYNPIAKGGEEGLRIAQDRLTHWLGVGAQPSPTVERLVKQGAAKAA</sequence>
<dbReference type="EMBL" id="CP000316">
    <property type="protein sequence ID" value="ABE43626.1"/>
    <property type="molecule type" value="Genomic_DNA"/>
</dbReference>
<dbReference type="RefSeq" id="WP_011482625.1">
    <property type="nucleotide sequence ID" value="NC_007948.1"/>
</dbReference>
<dbReference type="SMR" id="Q12CW6"/>
<dbReference type="STRING" id="296591.Bpro_1690"/>
<dbReference type="KEGG" id="pol:Bpro_1690"/>
<dbReference type="eggNOG" id="COG0228">
    <property type="taxonomic scope" value="Bacteria"/>
</dbReference>
<dbReference type="HOGENOM" id="CLU_100590_5_1_4"/>
<dbReference type="OrthoDB" id="9807878at2"/>
<dbReference type="Proteomes" id="UP000001983">
    <property type="component" value="Chromosome"/>
</dbReference>
<dbReference type="GO" id="GO:0005737">
    <property type="term" value="C:cytoplasm"/>
    <property type="evidence" value="ECO:0007669"/>
    <property type="project" value="UniProtKB-ARBA"/>
</dbReference>
<dbReference type="GO" id="GO:0015935">
    <property type="term" value="C:small ribosomal subunit"/>
    <property type="evidence" value="ECO:0007669"/>
    <property type="project" value="TreeGrafter"/>
</dbReference>
<dbReference type="GO" id="GO:0003735">
    <property type="term" value="F:structural constituent of ribosome"/>
    <property type="evidence" value="ECO:0007669"/>
    <property type="project" value="InterPro"/>
</dbReference>
<dbReference type="GO" id="GO:0006412">
    <property type="term" value="P:translation"/>
    <property type="evidence" value="ECO:0007669"/>
    <property type="project" value="UniProtKB-UniRule"/>
</dbReference>
<dbReference type="Gene3D" id="3.30.1320.10">
    <property type="match status" value="1"/>
</dbReference>
<dbReference type="HAMAP" id="MF_00385">
    <property type="entry name" value="Ribosomal_bS16"/>
    <property type="match status" value="1"/>
</dbReference>
<dbReference type="InterPro" id="IPR000307">
    <property type="entry name" value="Ribosomal_bS16"/>
</dbReference>
<dbReference type="InterPro" id="IPR023803">
    <property type="entry name" value="Ribosomal_bS16_dom_sf"/>
</dbReference>
<dbReference type="NCBIfam" id="TIGR00002">
    <property type="entry name" value="S16"/>
    <property type="match status" value="1"/>
</dbReference>
<dbReference type="PANTHER" id="PTHR12919">
    <property type="entry name" value="30S RIBOSOMAL PROTEIN S16"/>
    <property type="match status" value="1"/>
</dbReference>
<dbReference type="PANTHER" id="PTHR12919:SF20">
    <property type="entry name" value="SMALL RIBOSOMAL SUBUNIT PROTEIN BS16M"/>
    <property type="match status" value="1"/>
</dbReference>
<dbReference type="Pfam" id="PF00886">
    <property type="entry name" value="Ribosomal_S16"/>
    <property type="match status" value="1"/>
</dbReference>
<dbReference type="SUPFAM" id="SSF54565">
    <property type="entry name" value="Ribosomal protein S16"/>
    <property type="match status" value="1"/>
</dbReference>